<dbReference type="EMBL" id="CP000886">
    <property type="protein sequence ID" value="ABX69208.1"/>
    <property type="molecule type" value="Genomic_DNA"/>
</dbReference>
<dbReference type="RefSeq" id="WP_000091706.1">
    <property type="nucleotide sequence ID" value="NC_010102.1"/>
</dbReference>
<dbReference type="BMRB" id="A9N4Q8"/>
<dbReference type="SMR" id="A9N4Q8"/>
<dbReference type="KEGG" id="spq:SPAB_03877"/>
<dbReference type="PATRIC" id="fig|1016998.12.peg.3654"/>
<dbReference type="HOGENOM" id="CLU_170994_0_0_6"/>
<dbReference type="BioCyc" id="SENT1016998:SPAB_RS15765-MONOMER"/>
<dbReference type="Proteomes" id="UP000008556">
    <property type="component" value="Chromosome"/>
</dbReference>
<dbReference type="GO" id="GO:0005829">
    <property type="term" value="C:cytosol"/>
    <property type="evidence" value="ECO:0007669"/>
    <property type="project" value="TreeGrafter"/>
</dbReference>
<dbReference type="GO" id="GO:0005506">
    <property type="term" value="F:iron ion binding"/>
    <property type="evidence" value="ECO:0007669"/>
    <property type="project" value="UniProtKB-UniRule"/>
</dbReference>
<dbReference type="GO" id="GO:0034599">
    <property type="term" value="P:cellular response to oxidative stress"/>
    <property type="evidence" value="ECO:0007669"/>
    <property type="project" value="TreeGrafter"/>
</dbReference>
<dbReference type="FunFam" id="1.10.3880.10:FF:000001">
    <property type="entry name" value="Probable Fe(2+)-trafficking protein"/>
    <property type="match status" value="1"/>
</dbReference>
<dbReference type="Gene3D" id="1.10.3880.10">
    <property type="entry name" value="Fe(II) trafficking protein YggX"/>
    <property type="match status" value="1"/>
</dbReference>
<dbReference type="HAMAP" id="MF_00686">
    <property type="entry name" value="Fe_traffic_YggX"/>
    <property type="match status" value="1"/>
</dbReference>
<dbReference type="InterPro" id="IPR007457">
    <property type="entry name" value="Fe_traffick_prot_YggX"/>
</dbReference>
<dbReference type="InterPro" id="IPR036766">
    <property type="entry name" value="Fe_traffick_prot_YggX_sf"/>
</dbReference>
<dbReference type="NCBIfam" id="NF003817">
    <property type="entry name" value="PRK05408.1"/>
    <property type="match status" value="1"/>
</dbReference>
<dbReference type="PANTHER" id="PTHR36965">
    <property type="entry name" value="FE(2+)-TRAFFICKING PROTEIN-RELATED"/>
    <property type="match status" value="1"/>
</dbReference>
<dbReference type="PANTHER" id="PTHR36965:SF1">
    <property type="entry name" value="FE(2+)-TRAFFICKING PROTEIN-RELATED"/>
    <property type="match status" value="1"/>
</dbReference>
<dbReference type="Pfam" id="PF04362">
    <property type="entry name" value="Iron_traffic"/>
    <property type="match status" value="1"/>
</dbReference>
<dbReference type="PIRSF" id="PIRSF029827">
    <property type="entry name" value="Fe_traffic_YggX"/>
    <property type="match status" value="1"/>
</dbReference>
<dbReference type="SUPFAM" id="SSF111148">
    <property type="entry name" value="YggX-like"/>
    <property type="match status" value="1"/>
</dbReference>
<name>FETP_SALPB</name>
<feature type="chain" id="PRO_1000083083" description="Probable Fe(2+)-trafficking protein">
    <location>
        <begin position="1"/>
        <end position="91"/>
    </location>
</feature>
<protein>
    <recommendedName>
        <fullName evidence="1">Probable Fe(2+)-trafficking protein</fullName>
    </recommendedName>
</protein>
<organism>
    <name type="scientific">Salmonella paratyphi B (strain ATCC BAA-1250 / SPB7)</name>
    <dbReference type="NCBI Taxonomy" id="1016998"/>
    <lineage>
        <taxon>Bacteria</taxon>
        <taxon>Pseudomonadati</taxon>
        <taxon>Pseudomonadota</taxon>
        <taxon>Gammaproteobacteria</taxon>
        <taxon>Enterobacterales</taxon>
        <taxon>Enterobacteriaceae</taxon>
        <taxon>Salmonella</taxon>
    </lineage>
</organism>
<reference key="1">
    <citation type="submission" date="2007-11" db="EMBL/GenBank/DDBJ databases">
        <authorList>
            <consortium name="The Salmonella enterica serovar Paratyphi B Genome Sequencing Project"/>
            <person name="McClelland M."/>
            <person name="Sanderson E.K."/>
            <person name="Porwollik S."/>
            <person name="Spieth J."/>
            <person name="Clifton W.S."/>
            <person name="Fulton R."/>
            <person name="Cordes M."/>
            <person name="Wollam A."/>
            <person name="Shah N."/>
            <person name="Pepin K."/>
            <person name="Bhonagiri V."/>
            <person name="Nash W."/>
            <person name="Johnson M."/>
            <person name="Thiruvilangam P."/>
            <person name="Wilson R."/>
        </authorList>
    </citation>
    <scope>NUCLEOTIDE SEQUENCE [LARGE SCALE GENOMIC DNA]</scope>
    <source>
        <strain>ATCC BAA-1250 / SPB7</strain>
    </source>
</reference>
<comment type="function">
    <text evidence="1">Could be a mediator in iron transactions between iron acquisition and iron-requiring processes, such as synthesis and/or repair of Fe-S clusters in biosynthetic enzymes.</text>
</comment>
<comment type="subunit">
    <text evidence="1">Monomer.</text>
</comment>
<comment type="similarity">
    <text evidence="1">Belongs to the Fe(2+)-trafficking protein family.</text>
</comment>
<sequence length="91" mass="10899">MSRTIFCTYLQRDAEGQDFQLYPGELGKRIYNEISKDAWAQWQHKQTMLINEKKLNMMNAEHRKLLEQEMVSFLFEGKDVHIEGYTPEDKK</sequence>
<evidence type="ECO:0000255" key="1">
    <source>
        <dbReference type="HAMAP-Rule" id="MF_00686"/>
    </source>
</evidence>
<accession>A9N4Q8</accession>
<gene>
    <name evidence="1" type="primary">yggX</name>
    <name type="ordered locus">SPAB_03877</name>
</gene>
<proteinExistence type="inferred from homology"/>
<keyword id="KW-0408">Iron</keyword>